<comment type="function">
    <text evidence="1 3">Catalyzes the deamination of adenosine to inosine at the wobble position 34 of tRNA(Arg2).</text>
</comment>
<comment type="catalytic activity">
    <reaction evidence="1">
        <text>adenosine(34) in tRNA + H2O + H(+) = inosine(34) in tRNA + NH4(+)</text>
        <dbReference type="Rhea" id="RHEA:43168"/>
        <dbReference type="Rhea" id="RHEA-COMP:10373"/>
        <dbReference type="Rhea" id="RHEA-COMP:10374"/>
        <dbReference type="ChEBI" id="CHEBI:15377"/>
        <dbReference type="ChEBI" id="CHEBI:15378"/>
        <dbReference type="ChEBI" id="CHEBI:28938"/>
        <dbReference type="ChEBI" id="CHEBI:74411"/>
        <dbReference type="ChEBI" id="CHEBI:82852"/>
        <dbReference type="EC" id="3.5.4.33"/>
    </reaction>
</comment>
<comment type="cofactor">
    <cofactor evidence="1 3">
        <name>Zn(2+)</name>
        <dbReference type="ChEBI" id="CHEBI:29105"/>
    </cofactor>
    <text evidence="1 3">Binds 1 zinc ion per subunit.</text>
</comment>
<comment type="subunit">
    <text evidence="1 3">Homodimer.</text>
</comment>
<comment type="similarity">
    <text evidence="1">Belongs to the cytidine and deoxycytidylate deaminase family.</text>
</comment>
<comment type="sequence caution" evidence="4">
    <conflict type="erroneous initiation">
        <sequence resource="EMBL-CDS" id="AAT86349"/>
    </conflict>
    <text>Extended N-terminus.</text>
</comment>
<feature type="chain" id="PRO_0000171709" description="tRNA-specific adenosine deaminase">
    <location>
        <begin position="1"/>
        <end position="171"/>
    </location>
</feature>
<feature type="domain" description="CMP/dCMP-type deaminase" evidence="2">
    <location>
        <begin position="6"/>
        <end position="133"/>
    </location>
</feature>
<feature type="active site" description="Proton donor" evidence="1">
    <location>
        <position position="59"/>
    </location>
</feature>
<feature type="binding site" evidence="1 3">
    <location>
        <position position="57"/>
    </location>
    <ligand>
        <name>Zn(2+)</name>
        <dbReference type="ChEBI" id="CHEBI:29105"/>
        <note>catalytic</note>
    </ligand>
</feature>
<feature type="binding site" evidence="1 3">
    <location>
        <position position="87"/>
    </location>
    <ligand>
        <name>Zn(2+)</name>
        <dbReference type="ChEBI" id="CHEBI:29105"/>
        <note>catalytic</note>
    </ligand>
</feature>
<feature type="binding site" evidence="1 3">
    <location>
        <position position="90"/>
    </location>
    <ligand>
        <name>Zn(2+)</name>
        <dbReference type="ChEBI" id="CHEBI:29105"/>
        <note>catalytic</note>
    </ligand>
</feature>
<feature type="helix" evidence="5">
    <location>
        <begin position="5"/>
        <end position="24"/>
    </location>
</feature>
<feature type="strand" evidence="5">
    <location>
        <begin position="31"/>
        <end position="36"/>
    </location>
</feature>
<feature type="strand" evidence="5">
    <location>
        <begin position="39"/>
        <end position="45"/>
    </location>
</feature>
<feature type="helix" evidence="5">
    <location>
        <begin position="48"/>
        <end position="51"/>
    </location>
</feature>
<feature type="helix" evidence="5">
    <location>
        <begin position="58"/>
        <end position="70"/>
    </location>
</feature>
<feature type="strand" evidence="5">
    <location>
        <begin position="78"/>
        <end position="84"/>
    </location>
</feature>
<feature type="helix" evidence="5">
    <location>
        <begin position="88"/>
        <end position="96"/>
    </location>
</feature>
<feature type="strand" evidence="5">
    <location>
        <begin position="101"/>
        <end position="106"/>
    </location>
</feature>
<feature type="turn" evidence="5">
    <location>
        <begin position="109"/>
        <end position="111"/>
    </location>
</feature>
<feature type="turn" evidence="5">
    <location>
        <begin position="113"/>
        <end position="116"/>
    </location>
</feature>
<feature type="helix" evidence="5">
    <location>
        <begin position="120"/>
        <end position="122"/>
    </location>
</feature>
<feature type="turn" evidence="5">
    <location>
        <begin position="124"/>
        <end position="127"/>
    </location>
</feature>
<feature type="strand" evidence="5">
    <location>
        <begin position="131"/>
        <end position="134"/>
    </location>
</feature>
<feature type="helix" evidence="5">
    <location>
        <begin position="138"/>
        <end position="164"/>
    </location>
</feature>
<proteinExistence type="evidence at protein level"/>
<organism>
    <name type="scientific">Streptococcus pyogenes serotype M6 (strain ATCC BAA-946 / MGAS10394)</name>
    <dbReference type="NCBI Taxonomy" id="286636"/>
    <lineage>
        <taxon>Bacteria</taxon>
        <taxon>Bacillati</taxon>
        <taxon>Bacillota</taxon>
        <taxon>Bacilli</taxon>
        <taxon>Lactobacillales</taxon>
        <taxon>Streptococcaceae</taxon>
        <taxon>Streptococcus</taxon>
    </lineage>
</organism>
<name>TADA_STRP6</name>
<dbReference type="EC" id="3.5.4.33" evidence="1"/>
<dbReference type="EMBL" id="CP000003">
    <property type="protein sequence ID" value="AAT86349.1"/>
    <property type="status" value="ALT_INIT"/>
    <property type="molecule type" value="Genomic_DNA"/>
</dbReference>
<dbReference type="RefSeq" id="WP_002992549.1">
    <property type="nucleotide sequence ID" value="NC_006086.1"/>
</dbReference>
<dbReference type="PDB" id="2NX8">
    <property type="method" value="X-ray"/>
    <property type="resolution" value="2.00 A"/>
    <property type="chains" value="A=1-171"/>
</dbReference>
<dbReference type="PDBsum" id="2NX8"/>
<dbReference type="SMR" id="Q5XE14"/>
<dbReference type="GeneID" id="69900154"/>
<dbReference type="KEGG" id="spa:M6_Spy0214"/>
<dbReference type="HOGENOM" id="CLU_025810_3_2_9"/>
<dbReference type="BRENDA" id="3.5.4.33">
    <property type="organism ID" value="5935"/>
</dbReference>
<dbReference type="EvolutionaryTrace" id="Q5XE14"/>
<dbReference type="Proteomes" id="UP000001167">
    <property type="component" value="Chromosome"/>
</dbReference>
<dbReference type="GO" id="GO:0052717">
    <property type="term" value="F:tRNA-specific adenosine-34 deaminase activity"/>
    <property type="evidence" value="ECO:0007669"/>
    <property type="project" value="UniProtKB-UniRule"/>
</dbReference>
<dbReference type="GO" id="GO:0008270">
    <property type="term" value="F:zinc ion binding"/>
    <property type="evidence" value="ECO:0007669"/>
    <property type="project" value="UniProtKB-UniRule"/>
</dbReference>
<dbReference type="GO" id="GO:0002100">
    <property type="term" value="P:tRNA wobble adenosine to inosine editing"/>
    <property type="evidence" value="ECO:0007669"/>
    <property type="project" value="UniProtKB-UniRule"/>
</dbReference>
<dbReference type="CDD" id="cd01285">
    <property type="entry name" value="nucleoside_deaminase"/>
    <property type="match status" value="1"/>
</dbReference>
<dbReference type="FunFam" id="3.40.140.10:FF:000005">
    <property type="entry name" value="tRNA-specific adenosine deaminase"/>
    <property type="match status" value="1"/>
</dbReference>
<dbReference type="Gene3D" id="3.40.140.10">
    <property type="entry name" value="Cytidine Deaminase, domain 2"/>
    <property type="match status" value="1"/>
</dbReference>
<dbReference type="HAMAP" id="MF_00972">
    <property type="entry name" value="tRNA_aden_deaminase"/>
    <property type="match status" value="1"/>
</dbReference>
<dbReference type="InterPro" id="IPR016192">
    <property type="entry name" value="APOBEC/CMP_deaminase_Zn-bd"/>
</dbReference>
<dbReference type="InterPro" id="IPR002125">
    <property type="entry name" value="CMP_dCMP_dom"/>
</dbReference>
<dbReference type="InterPro" id="IPR016193">
    <property type="entry name" value="Cytidine_deaminase-like"/>
</dbReference>
<dbReference type="InterPro" id="IPR028883">
    <property type="entry name" value="tRNA_aden_deaminase"/>
</dbReference>
<dbReference type="NCBIfam" id="NF008113">
    <property type="entry name" value="PRK10860.1"/>
    <property type="match status" value="1"/>
</dbReference>
<dbReference type="PANTHER" id="PTHR11079">
    <property type="entry name" value="CYTOSINE DEAMINASE FAMILY MEMBER"/>
    <property type="match status" value="1"/>
</dbReference>
<dbReference type="PANTHER" id="PTHR11079:SF202">
    <property type="entry name" value="TRNA-SPECIFIC ADENOSINE DEAMINASE"/>
    <property type="match status" value="1"/>
</dbReference>
<dbReference type="Pfam" id="PF14437">
    <property type="entry name" value="MafB19-deam"/>
    <property type="match status" value="1"/>
</dbReference>
<dbReference type="SUPFAM" id="SSF53927">
    <property type="entry name" value="Cytidine deaminase-like"/>
    <property type="match status" value="1"/>
</dbReference>
<dbReference type="PROSITE" id="PS00903">
    <property type="entry name" value="CYT_DCMP_DEAMINASES_1"/>
    <property type="match status" value="1"/>
</dbReference>
<dbReference type="PROSITE" id="PS51747">
    <property type="entry name" value="CYT_DCMP_DEAMINASES_2"/>
    <property type="match status" value="1"/>
</dbReference>
<keyword id="KW-0002">3D-structure</keyword>
<keyword id="KW-0378">Hydrolase</keyword>
<keyword id="KW-0479">Metal-binding</keyword>
<keyword id="KW-0819">tRNA processing</keyword>
<keyword id="KW-0862">Zinc</keyword>
<sequence length="171" mass="19261">MPYSLEEQTYFMQEALKEAEKSLQKAEIPIGCVIVKDGEIIGRGHNAREESNQAIMHAEMMAINEANAHEGNWRLLDTTLFVTIEPCVMCSGAIGLARIPHVIYGASNQKFGGADSLYQILTDERLNHRVQVERGLLAADCANIMQTFFRQGRERKKIAKHLIKEQSDPFD</sequence>
<protein>
    <recommendedName>
        <fullName evidence="1">tRNA-specific adenosine deaminase</fullName>
        <ecNumber evidence="1">3.5.4.33</ecNumber>
    </recommendedName>
</protein>
<gene>
    <name evidence="1" type="primary">tadA</name>
    <name type="ordered locus">M6_Spy0214</name>
</gene>
<evidence type="ECO:0000255" key="1">
    <source>
        <dbReference type="HAMAP-Rule" id="MF_00972"/>
    </source>
</evidence>
<evidence type="ECO:0000255" key="2">
    <source>
        <dbReference type="PROSITE-ProRule" id="PRU01083"/>
    </source>
</evidence>
<evidence type="ECO:0000269" key="3">
    <source>
    </source>
</evidence>
<evidence type="ECO:0000305" key="4"/>
<evidence type="ECO:0007829" key="5">
    <source>
        <dbReference type="PDB" id="2NX8"/>
    </source>
</evidence>
<reference key="1">
    <citation type="journal article" date="2004" name="J. Infect. Dis.">
        <title>Progress toward characterization of the group A Streptococcus metagenome: complete genome sequence of a macrolide-resistant serotype M6 strain.</title>
        <authorList>
            <person name="Banks D.J."/>
            <person name="Porcella S.F."/>
            <person name="Barbian K.D."/>
            <person name="Beres S.B."/>
            <person name="Philips L.E."/>
            <person name="Voyich J.M."/>
            <person name="DeLeo F.R."/>
            <person name="Martin J.M."/>
            <person name="Somerville G.A."/>
            <person name="Musser J.M."/>
        </authorList>
    </citation>
    <scope>NUCLEOTIDE SEQUENCE [LARGE SCALE GENOMIC DNA]</scope>
    <source>
        <strain>ATCC BAA-946 / MGAS10394</strain>
    </source>
</reference>
<reference key="2">
    <citation type="journal article" date="2007" name="Proteins">
        <title>Crystal structure of the tRNA-specific adenosine deaminase from Streptococcus pyogenes.</title>
        <authorList>
            <person name="Lee W.H."/>
            <person name="Kim Y.K."/>
            <person name="Nam K.H."/>
            <person name="Priyadarshi A."/>
            <person name="Lee E.H."/>
            <person name="Kim E.E."/>
            <person name="Jeon Y.H."/>
            <person name="Cheong C."/>
            <person name="Hwang K.Y."/>
        </authorList>
    </citation>
    <scope>X-RAY CRYSTALLOGRAPHY (2.0 ANGSTROMS) IN COMPLEX WITH ZINC</scope>
    <scope>COFACTOR</scope>
    <scope>SUBUNIT</scope>
    <scope>FUNCTION</scope>
</reference>
<accession>Q5XE14</accession>